<proteinExistence type="inferred from homology"/>
<keyword id="KW-0067">ATP-binding</keyword>
<keyword id="KW-0436">Ligase</keyword>
<keyword id="KW-0547">Nucleotide-binding</keyword>
<keyword id="KW-0658">Purine biosynthesis</keyword>
<sequence>MEKRDELYRGKAKSVYKTDDADRLILLFRNDTSAFDGKRIEQLDRKGMVNNKFNAFIMQKLEEAGVPTQFDKLLGDNECLVKKLDMIPVECVVRNYAAGSLVKRLGVEEGIKLEPSTFELFLKNDEKGDPFINESHVVAFGWGTAEQLVEMKKLSLKVNEVLSKLFDDAGLLLVDFKLEFGVFHGQIVLGDEFSPDGCRLWDKETRKKMDKDRFRQGLGDVIEAYEEVAKRLGVPL</sequence>
<organism>
    <name type="scientific">Pseudomonas entomophila (strain L48)</name>
    <dbReference type="NCBI Taxonomy" id="384676"/>
    <lineage>
        <taxon>Bacteria</taxon>
        <taxon>Pseudomonadati</taxon>
        <taxon>Pseudomonadota</taxon>
        <taxon>Gammaproteobacteria</taxon>
        <taxon>Pseudomonadales</taxon>
        <taxon>Pseudomonadaceae</taxon>
        <taxon>Pseudomonas</taxon>
    </lineage>
</organism>
<comment type="catalytic activity">
    <reaction evidence="1">
        <text>5-amino-1-(5-phospho-D-ribosyl)imidazole-4-carboxylate + L-aspartate + ATP = (2S)-2-[5-amino-1-(5-phospho-beta-D-ribosyl)imidazole-4-carboxamido]succinate + ADP + phosphate + 2 H(+)</text>
        <dbReference type="Rhea" id="RHEA:22628"/>
        <dbReference type="ChEBI" id="CHEBI:15378"/>
        <dbReference type="ChEBI" id="CHEBI:29991"/>
        <dbReference type="ChEBI" id="CHEBI:30616"/>
        <dbReference type="ChEBI" id="CHEBI:43474"/>
        <dbReference type="ChEBI" id="CHEBI:58443"/>
        <dbReference type="ChEBI" id="CHEBI:77657"/>
        <dbReference type="ChEBI" id="CHEBI:456216"/>
        <dbReference type="EC" id="6.3.2.6"/>
    </reaction>
</comment>
<comment type="pathway">
    <text evidence="1">Purine metabolism; IMP biosynthesis via de novo pathway; 5-amino-1-(5-phospho-D-ribosyl)imidazole-4-carboxamide from 5-amino-1-(5-phospho-D-ribosyl)imidazole-4-carboxylate: step 1/2.</text>
</comment>
<comment type="similarity">
    <text evidence="1">Belongs to the SAICAR synthetase family.</text>
</comment>
<protein>
    <recommendedName>
        <fullName evidence="1">Phosphoribosylaminoimidazole-succinocarboxamide synthase</fullName>
        <ecNumber evidence="1">6.3.2.6</ecNumber>
    </recommendedName>
    <alternativeName>
        <fullName evidence="1">SAICAR synthetase</fullName>
    </alternativeName>
</protein>
<reference key="1">
    <citation type="journal article" date="2006" name="Nat. Biotechnol.">
        <title>Complete genome sequence of the entomopathogenic and metabolically versatile soil bacterium Pseudomonas entomophila.</title>
        <authorList>
            <person name="Vodovar N."/>
            <person name="Vallenet D."/>
            <person name="Cruveiller S."/>
            <person name="Rouy Z."/>
            <person name="Barbe V."/>
            <person name="Acosta C."/>
            <person name="Cattolico L."/>
            <person name="Jubin C."/>
            <person name="Lajus A."/>
            <person name="Segurens B."/>
            <person name="Vacherie B."/>
            <person name="Wincker P."/>
            <person name="Weissenbach J."/>
            <person name="Lemaitre B."/>
            <person name="Medigue C."/>
            <person name="Boccard F."/>
        </authorList>
    </citation>
    <scope>NUCLEOTIDE SEQUENCE [LARGE SCALE GENOMIC DNA]</scope>
    <source>
        <strain>L48</strain>
    </source>
</reference>
<accession>Q1I6H8</accession>
<evidence type="ECO:0000255" key="1">
    <source>
        <dbReference type="HAMAP-Rule" id="MF_00137"/>
    </source>
</evidence>
<name>PUR7_PSEE4</name>
<dbReference type="EC" id="6.3.2.6" evidence="1"/>
<dbReference type="EMBL" id="CT573326">
    <property type="protein sequence ID" value="CAK16757.1"/>
    <property type="molecule type" value="Genomic_DNA"/>
</dbReference>
<dbReference type="RefSeq" id="WP_011535129.1">
    <property type="nucleotide sequence ID" value="NC_008027.1"/>
</dbReference>
<dbReference type="SMR" id="Q1I6H8"/>
<dbReference type="STRING" id="384676.PSEEN4061"/>
<dbReference type="GeneID" id="83671480"/>
<dbReference type="KEGG" id="pen:PSEEN4061"/>
<dbReference type="eggNOG" id="COG0152">
    <property type="taxonomic scope" value="Bacteria"/>
</dbReference>
<dbReference type="HOGENOM" id="CLU_061495_2_0_6"/>
<dbReference type="OrthoDB" id="9801549at2"/>
<dbReference type="UniPathway" id="UPA00074">
    <property type="reaction ID" value="UER00131"/>
</dbReference>
<dbReference type="Proteomes" id="UP000000658">
    <property type="component" value="Chromosome"/>
</dbReference>
<dbReference type="GO" id="GO:0005829">
    <property type="term" value="C:cytosol"/>
    <property type="evidence" value="ECO:0007669"/>
    <property type="project" value="TreeGrafter"/>
</dbReference>
<dbReference type="GO" id="GO:0005524">
    <property type="term" value="F:ATP binding"/>
    <property type="evidence" value="ECO:0007669"/>
    <property type="project" value="UniProtKB-KW"/>
</dbReference>
<dbReference type="GO" id="GO:0004639">
    <property type="term" value="F:phosphoribosylaminoimidazolesuccinocarboxamide synthase activity"/>
    <property type="evidence" value="ECO:0007669"/>
    <property type="project" value="UniProtKB-UniRule"/>
</dbReference>
<dbReference type="GO" id="GO:0006189">
    <property type="term" value="P:'de novo' IMP biosynthetic process"/>
    <property type="evidence" value="ECO:0007669"/>
    <property type="project" value="UniProtKB-UniRule"/>
</dbReference>
<dbReference type="GO" id="GO:0009236">
    <property type="term" value="P:cobalamin biosynthetic process"/>
    <property type="evidence" value="ECO:0007669"/>
    <property type="project" value="InterPro"/>
</dbReference>
<dbReference type="CDD" id="cd01415">
    <property type="entry name" value="SAICAR_synt_PurC"/>
    <property type="match status" value="1"/>
</dbReference>
<dbReference type="FunFam" id="3.30.200.20:FF:000086">
    <property type="entry name" value="Phosphoribosylaminoimidazole-succinocarboxamide synthase"/>
    <property type="match status" value="1"/>
</dbReference>
<dbReference type="FunFam" id="3.30.470.20:FF:000006">
    <property type="entry name" value="Phosphoribosylaminoimidazole-succinocarboxamide synthase"/>
    <property type="match status" value="1"/>
</dbReference>
<dbReference type="Gene3D" id="3.30.470.20">
    <property type="entry name" value="ATP-grasp fold, B domain"/>
    <property type="match status" value="1"/>
</dbReference>
<dbReference type="Gene3D" id="3.30.200.20">
    <property type="entry name" value="Phosphorylase Kinase, domain 1"/>
    <property type="match status" value="1"/>
</dbReference>
<dbReference type="HAMAP" id="MF_00137">
    <property type="entry name" value="SAICAR_synth"/>
    <property type="match status" value="1"/>
</dbReference>
<dbReference type="InterPro" id="IPR028923">
    <property type="entry name" value="SAICAR_synt/ADE2_N"/>
</dbReference>
<dbReference type="InterPro" id="IPR033934">
    <property type="entry name" value="SAICAR_synt_PurC"/>
</dbReference>
<dbReference type="InterPro" id="IPR001636">
    <property type="entry name" value="SAICAR_synth"/>
</dbReference>
<dbReference type="InterPro" id="IPR050089">
    <property type="entry name" value="SAICAR_synthetase"/>
</dbReference>
<dbReference type="InterPro" id="IPR018236">
    <property type="entry name" value="SAICAR_synthetase_CS"/>
</dbReference>
<dbReference type="NCBIfam" id="TIGR00081">
    <property type="entry name" value="purC"/>
    <property type="match status" value="1"/>
</dbReference>
<dbReference type="PANTHER" id="PTHR43599">
    <property type="entry name" value="MULTIFUNCTIONAL PROTEIN ADE2"/>
    <property type="match status" value="1"/>
</dbReference>
<dbReference type="PANTHER" id="PTHR43599:SF3">
    <property type="entry name" value="SI:DKEY-6E2.2"/>
    <property type="match status" value="1"/>
</dbReference>
<dbReference type="Pfam" id="PF01259">
    <property type="entry name" value="SAICAR_synt"/>
    <property type="match status" value="1"/>
</dbReference>
<dbReference type="SUPFAM" id="SSF56104">
    <property type="entry name" value="SAICAR synthase-like"/>
    <property type="match status" value="1"/>
</dbReference>
<dbReference type="PROSITE" id="PS01057">
    <property type="entry name" value="SAICAR_SYNTHETASE_1"/>
    <property type="match status" value="1"/>
</dbReference>
<dbReference type="PROSITE" id="PS01058">
    <property type="entry name" value="SAICAR_SYNTHETASE_2"/>
    <property type="match status" value="1"/>
</dbReference>
<feature type="chain" id="PRO_1000018757" description="Phosphoribosylaminoimidazole-succinocarboxamide synthase">
    <location>
        <begin position="1"/>
        <end position="236"/>
    </location>
</feature>
<gene>
    <name evidence="1" type="primary">purC</name>
    <name type="ordered locus">PSEEN4061</name>
</gene>